<proteinExistence type="inferred from homology"/>
<feature type="chain" id="PRO_0000299422" description="Uncharacterized peptidase SACOL1756">
    <location>
        <begin position="1"/>
        <end position="351"/>
    </location>
</feature>
<feature type="binding site" evidence="1">
    <location>
        <position position="215"/>
    </location>
    <ligand>
        <name>Mn(2+)</name>
        <dbReference type="ChEBI" id="CHEBI:29035"/>
        <label>2</label>
    </ligand>
</feature>
<feature type="binding site" evidence="1">
    <location>
        <position position="226"/>
    </location>
    <ligand>
        <name>Mn(2+)</name>
        <dbReference type="ChEBI" id="CHEBI:29035"/>
        <label>1</label>
    </ligand>
</feature>
<feature type="binding site" evidence="1">
    <location>
        <position position="226"/>
    </location>
    <ligand>
        <name>Mn(2+)</name>
        <dbReference type="ChEBI" id="CHEBI:29035"/>
        <label>2</label>
    </ligand>
</feature>
<feature type="binding site" evidence="1">
    <location>
        <position position="290"/>
    </location>
    <ligand>
        <name>Mn(2+)</name>
        <dbReference type="ChEBI" id="CHEBI:29035"/>
        <label>1</label>
    </ligand>
</feature>
<feature type="binding site" evidence="1">
    <location>
        <position position="319"/>
    </location>
    <ligand>
        <name>Mn(2+)</name>
        <dbReference type="ChEBI" id="CHEBI:29035"/>
        <label>1</label>
    </ligand>
</feature>
<feature type="binding site" evidence="1">
    <location>
        <position position="333"/>
    </location>
    <ligand>
        <name>Mn(2+)</name>
        <dbReference type="ChEBI" id="CHEBI:29035"/>
        <label>1</label>
    </ligand>
</feature>
<feature type="binding site" evidence="1">
    <location>
        <position position="333"/>
    </location>
    <ligand>
        <name>Mn(2+)</name>
        <dbReference type="ChEBI" id="CHEBI:29035"/>
        <label>2</label>
    </ligand>
</feature>
<evidence type="ECO:0000255" key="1"/>
<evidence type="ECO:0000305" key="2"/>
<sequence>MTKISKIIDELNNQQADAAWITTPLNVYYFTGYRSEPHERLFALLIKKDGKQVLFCPKMEVEEVKASPFTGEIVGYLDTENPFSLYPQTINKLLIESEHLTVARQKQLISGFNVNSFGDVDLTIKQLRNIKSEDEISKIRKAAELADKCIEIGVSYLKEGVTECEVVNHIEQTIKQYGVNEMSFDTMVLFGDHAASPHGTPGDRRLKSNEYVLFDLGVIYEHYCSDMTRTIKFGEPSKEAQEIYNIVLEAETSAIQAIKPGIPLKDIDHIARNIISEKGYGEYFPHRLGHGLGLQEHEYQDVSSTNSNLLEAGMVITIEPGIYVPGVAGVRIEDDILVTNEGYEVLTHYEK</sequence>
<reference key="1">
    <citation type="journal article" date="2005" name="J. Bacteriol.">
        <title>Insights on evolution of virulence and resistance from the complete genome analysis of an early methicillin-resistant Staphylococcus aureus strain and a biofilm-producing methicillin-resistant Staphylococcus epidermidis strain.</title>
        <authorList>
            <person name="Gill S.R."/>
            <person name="Fouts D.E."/>
            <person name="Archer G.L."/>
            <person name="Mongodin E.F."/>
            <person name="DeBoy R.T."/>
            <person name="Ravel J."/>
            <person name="Paulsen I.T."/>
            <person name="Kolonay J.F."/>
            <person name="Brinkac L.M."/>
            <person name="Beanan M.J."/>
            <person name="Dodson R.J."/>
            <person name="Daugherty S.C."/>
            <person name="Madupu R."/>
            <person name="Angiuoli S.V."/>
            <person name="Durkin A.S."/>
            <person name="Haft D.H."/>
            <person name="Vamathevan J.J."/>
            <person name="Khouri H."/>
            <person name="Utterback T.R."/>
            <person name="Lee C."/>
            <person name="Dimitrov G."/>
            <person name="Jiang L."/>
            <person name="Qin H."/>
            <person name="Weidman J."/>
            <person name="Tran K."/>
            <person name="Kang K.H."/>
            <person name="Hance I.R."/>
            <person name="Nelson K.E."/>
            <person name="Fraser C.M."/>
        </authorList>
    </citation>
    <scope>NUCLEOTIDE SEQUENCE [LARGE SCALE GENOMIC DNA]</scope>
    <source>
        <strain>COL</strain>
    </source>
</reference>
<dbReference type="EC" id="3.4.-.-"/>
<dbReference type="EMBL" id="CP000046">
    <property type="protein sequence ID" value="AAW38285.1"/>
    <property type="molecule type" value="Genomic_DNA"/>
</dbReference>
<dbReference type="RefSeq" id="WP_000161661.1">
    <property type="nucleotide sequence ID" value="NZ_JBGOFO010000008.1"/>
</dbReference>
<dbReference type="SMR" id="Q5HF67"/>
<dbReference type="KEGG" id="sac:SACOL1756"/>
<dbReference type="HOGENOM" id="CLU_017266_4_2_9"/>
<dbReference type="Proteomes" id="UP000000530">
    <property type="component" value="Chromosome"/>
</dbReference>
<dbReference type="GO" id="GO:0016787">
    <property type="term" value="F:hydrolase activity"/>
    <property type="evidence" value="ECO:0007669"/>
    <property type="project" value="UniProtKB-KW"/>
</dbReference>
<dbReference type="GO" id="GO:0046872">
    <property type="term" value="F:metal ion binding"/>
    <property type="evidence" value="ECO:0007669"/>
    <property type="project" value="UniProtKB-KW"/>
</dbReference>
<dbReference type="CDD" id="cd01092">
    <property type="entry name" value="APP-like"/>
    <property type="match status" value="1"/>
</dbReference>
<dbReference type="FunFam" id="3.90.230.10:FF:000014">
    <property type="entry name" value="Aminopeptidase P family protein"/>
    <property type="match status" value="1"/>
</dbReference>
<dbReference type="Gene3D" id="3.90.230.10">
    <property type="entry name" value="Creatinase/methionine aminopeptidase superfamily"/>
    <property type="match status" value="1"/>
</dbReference>
<dbReference type="Gene3D" id="3.40.350.10">
    <property type="entry name" value="Creatinase/prolidase N-terminal domain"/>
    <property type="match status" value="1"/>
</dbReference>
<dbReference type="InterPro" id="IPR029149">
    <property type="entry name" value="Creatin/AminoP/Spt16_N"/>
</dbReference>
<dbReference type="InterPro" id="IPR036005">
    <property type="entry name" value="Creatinase/aminopeptidase-like"/>
</dbReference>
<dbReference type="InterPro" id="IPR000587">
    <property type="entry name" value="Creatinase_N"/>
</dbReference>
<dbReference type="InterPro" id="IPR000994">
    <property type="entry name" value="Pept_M24"/>
</dbReference>
<dbReference type="InterPro" id="IPR050659">
    <property type="entry name" value="Peptidase_M24B"/>
</dbReference>
<dbReference type="InterPro" id="IPR001131">
    <property type="entry name" value="Peptidase_M24B_aminopep-P_CS"/>
</dbReference>
<dbReference type="PANTHER" id="PTHR46112">
    <property type="entry name" value="AMINOPEPTIDASE"/>
    <property type="match status" value="1"/>
</dbReference>
<dbReference type="PANTHER" id="PTHR46112:SF10">
    <property type="entry name" value="DIPEPTIDASE YKVY-RELATED"/>
    <property type="match status" value="1"/>
</dbReference>
<dbReference type="Pfam" id="PF01321">
    <property type="entry name" value="Creatinase_N"/>
    <property type="match status" value="1"/>
</dbReference>
<dbReference type="Pfam" id="PF00557">
    <property type="entry name" value="Peptidase_M24"/>
    <property type="match status" value="1"/>
</dbReference>
<dbReference type="SUPFAM" id="SSF55920">
    <property type="entry name" value="Creatinase/aminopeptidase"/>
    <property type="match status" value="1"/>
</dbReference>
<dbReference type="SUPFAM" id="SSF53092">
    <property type="entry name" value="Creatinase/prolidase N-terminal domain"/>
    <property type="match status" value="1"/>
</dbReference>
<dbReference type="PROSITE" id="PS00491">
    <property type="entry name" value="PROLINE_PEPTIDASE"/>
    <property type="match status" value="1"/>
</dbReference>
<comment type="cofactor">
    <cofactor evidence="2">
        <name>Mn(2+)</name>
        <dbReference type="ChEBI" id="CHEBI:29035"/>
    </cofactor>
    <text evidence="2">Binds 2 manganese ions per subunit.</text>
</comment>
<comment type="similarity">
    <text evidence="2">Belongs to the peptidase M24B family.</text>
</comment>
<accession>Q5HF67</accession>
<organism>
    <name type="scientific">Staphylococcus aureus (strain COL)</name>
    <dbReference type="NCBI Taxonomy" id="93062"/>
    <lineage>
        <taxon>Bacteria</taxon>
        <taxon>Bacillati</taxon>
        <taxon>Bacillota</taxon>
        <taxon>Bacilli</taxon>
        <taxon>Bacillales</taxon>
        <taxon>Staphylococcaceae</taxon>
        <taxon>Staphylococcus</taxon>
    </lineage>
</organism>
<name>Y1756_STAAC</name>
<keyword id="KW-0378">Hydrolase</keyword>
<keyword id="KW-0464">Manganese</keyword>
<keyword id="KW-0479">Metal-binding</keyword>
<gene>
    <name type="ordered locus">SACOL1756</name>
</gene>
<protein>
    <recommendedName>
        <fullName>Uncharacterized peptidase SACOL1756</fullName>
        <ecNumber>3.4.-.-</ecNumber>
    </recommendedName>
</protein>